<name>RL10_STRU0</name>
<proteinExistence type="inferred from homology"/>
<feature type="chain" id="PRO_1000195571" description="Large ribosomal subunit protein uL10">
    <location>
        <begin position="1"/>
        <end position="166"/>
    </location>
</feature>
<gene>
    <name evidence="1" type="primary">rplJ</name>
    <name type="ordered locus">SUB0777</name>
</gene>
<accession>B9DU77</accession>
<evidence type="ECO:0000255" key="1">
    <source>
        <dbReference type="HAMAP-Rule" id="MF_00362"/>
    </source>
</evidence>
<evidence type="ECO:0000305" key="2"/>
<protein>
    <recommendedName>
        <fullName evidence="1">Large ribosomal subunit protein uL10</fullName>
    </recommendedName>
    <alternativeName>
        <fullName evidence="2">50S ribosomal protein L10</fullName>
    </alternativeName>
</protein>
<reference key="1">
    <citation type="journal article" date="2009" name="BMC Genomics">
        <title>Evidence for niche adaptation in the genome of the bovine pathogen Streptococcus uberis.</title>
        <authorList>
            <person name="Ward P.N."/>
            <person name="Holden M.T.G."/>
            <person name="Leigh J.A."/>
            <person name="Lennard N."/>
            <person name="Bignell A."/>
            <person name="Barron A."/>
            <person name="Clark L."/>
            <person name="Quail M.A."/>
            <person name="Woodward J."/>
            <person name="Barrell B.G."/>
            <person name="Egan S.A."/>
            <person name="Field T.R."/>
            <person name="Maskell D."/>
            <person name="Kehoe M."/>
            <person name="Dowson C.G."/>
            <person name="Chanter N."/>
            <person name="Whatmore A.M."/>
            <person name="Bentley S.D."/>
            <person name="Parkhill J."/>
        </authorList>
    </citation>
    <scope>NUCLEOTIDE SEQUENCE [LARGE SCALE GENOMIC DNA]</scope>
    <source>
        <strain>ATCC BAA-854 / 0140J</strain>
    </source>
</reference>
<organism>
    <name type="scientific">Streptococcus uberis (strain ATCC BAA-854 / 0140J)</name>
    <dbReference type="NCBI Taxonomy" id="218495"/>
    <lineage>
        <taxon>Bacteria</taxon>
        <taxon>Bacillati</taxon>
        <taxon>Bacillota</taxon>
        <taxon>Bacilli</taxon>
        <taxon>Lactobacillales</taxon>
        <taxon>Streptococcaceae</taxon>
        <taxon>Streptococcus</taxon>
    </lineage>
</organism>
<keyword id="KW-1185">Reference proteome</keyword>
<keyword id="KW-0687">Ribonucleoprotein</keyword>
<keyword id="KW-0689">Ribosomal protein</keyword>
<keyword id="KW-0694">RNA-binding</keyword>
<keyword id="KW-0699">rRNA-binding</keyword>
<dbReference type="EMBL" id="AM946015">
    <property type="protein sequence ID" value="CAR41762.1"/>
    <property type="molecule type" value="Genomic_DNA"/>
</dbReference>
<dbReference type="RefSeq" id="WP_012658294.1">
    <property type="nucleotide sequence ID" value="NC_012004.1"/>
</dbReference>
<dbReference type="SMR" id="B9DU77"/>
<dbReference type="STRING" id="218495.SUB0777"/>
<dbReference type="GeneID" id="93826061"/>
<dbReference type="KEGG" id="sub:SUB0777"/>
<dbReference type="eggNOG" id="COG0244">
    <property type="taxonomic scope" value="Bacteria"/>
</dbReference>
<dbReference type="HOGENOM" id="CLU_092227_2_0_9"/>
<dbReference type="OrthoDB" id="9808307at2"/>
<dbReference type="Proteomes" id="UP000000449">
    <property type="component" value="Chromosome"/>
</dbReference>
<dbReference type="GO" id="GO:0015934">
    <property type="term" value="C:large ribosomal subunit"/>
    <property type="evidence" value="ECO:0007669"/>
    <property type="project" value="InterPro"/>
</dbReference>
<dbReference type="GO" id="GO:0070180">
    <property type="term" value="F:large ribosomal subunit rRNA binding"/>
    <property type="evidence" value="ECO:0007669"/>
    <property type="project" value="UniProtKB-UniRule"/>
</dbReference>
<dbReference type="GO" id="GO:0003735">
    <property type="term" value="F:structural constituent of ribosome"/>
    <property type="evidence" value="ECO:0007669"/>
    <property type="project" value="InterPro"/>
</dbReference>
<dbReference type="GO" id="GO:0006412">
    <property type="term" value="P:translation"/>
    <property type="evidence" value="ECO:0007669"/>
    <property type="project" value="UniProtKB-UniRule"/>
</dbReference>
<dbReference type="CDD" id="cd05797">
    <property type="entry name" value="Ribosomal_L10"/>
    <property type="match status" value="1"/>
</dbReference>
<dbReference type="FunFam" id="3.30.70.1730:FF:000001">
    <property type="entry name" value="50S ribosomal protein L10"/>
    <property type="match status" value="1"/>
</dbReference>
<dbReference type="Gene3D" id="3.30.70.1730">
    <property type="match status" value="1"/>
</dbReference>
<dbReference type="HAMAP" id="MF_00362">
    <property type="entry name" value="Ribosomal_uL10"/>
    <property type="match status" value="1"/>
</dbReference>
<dbReference type="InterPro" id="IPR001790">
    <property type="entry name" value="Ribosomal_uL10"/>
</dbReference>
<dbReference type="InterPro" id="IPR043141">
    <property type="entry name" value="Ribosomal_uL10-like_sf"/>
</dbReference>
<dbReference type="InterPro" id="IPR022973">
    <property type="entry name" value="Ribosomal_uL10_bac"/>
</dbReference>
<dbReference type="InterPro" id="IPR047865">
    <property type="entry name" value="Ribosomal_uL10_bac_type"/>
</dbReference>
<dbReference type="InterPro" id="IPR002363">
    <property type="entry name" value="Ribosomal_uL10_CS_bac"/>
</dbReference>
<dbReference type="NCBIfam" id="NF000955">
    <property type="entry name" value="PRK00099.1-1"/>
    <property type="match status" value="1"/>
</dbReference>
<dbReference type="PANTHER" id="PTHR11560">
    <property type="entry name" value="39S RIBOSOMAL PROTEIN L10, MITOCHONDRIAL"/>
    <property type="match status" value="1"/>
</dbReference>
<dbReference type="Pfam" id="PF00466">
    <property type="entry name" value="Ribosomal_L10"/>
    <property type="match status" value="1"/>
</dbReference>
<dbReference type="SUPFAM" id="SSF160369">
    <property type="entry name" value="Ribosomal protein L10-like"/>
    <property type="match status" value="1"/>
</dbReference>
<dbReference type="PROSITE" id="PS01109">
    <property type="entry name" value="RIBOSOMAL_L10"/>
    <property type="match status" value="1"/>
</dbReference>
<sequence length="166" mass="17414">MSEAIIAKKAEQVDLVAEKMKAAASIVVVDSRGLTVGQDTELRRSLRESGVEFKVIKNSILSRAAEQAGLGDMKDLFVGPSAVAFSNEDVVAPAKIINDFAKTADALEIKGGAIEGAASSKEDIQALASLPNREGMLSMLLSVLQAPVRNVAYAVKAVAESKEDVA</sequence>
<comment type="function">
    <text evidence="1">Forms part of the ribosomal stalk, playing a central role in the interaction of the ribosome with GTP-bound translation factors.</text>
</comment>
<comment type="subunit">
    <text evidence="1">Part of the ribosomal stalk of the 50S ribosomal subunit. The N-terminus interacts with L11 and the large rRNA to form the base of the stalk. The C-terminus forms an elongated spine to which L12 dimers bind in a sequential fashion forming a multimeric L10(L12)X complex.</text>
</comment>
<comment type="similarity">
    <text evidence="1">Belongs to the universal ribosomal protein uL10 family.</text>
</comment>